<organism>
    <name type="scientific">Methanospirillum hungatei JF-1 (strain ATCC 27890 / DSM 864 / NBRC 100397 / JF-1)</name>
    <dbReference type="NCBI Taxonomy" id="323259"/>
    <lineage>
        <taxon>Archaea</taxon>
        <taxon>Methanobacteriati</taxon>
        <taxon>Methanobacteriota</taxon>
        <taxon>Stenosarchaea group</taxon>
        <taxon>Methanomicrobia</taxon>
        <taxon>Methanomicrobiales</taxon>
        <taxon>Methanospirillaceae</taxon>
        <taxon>Methanospirillum</taxon>
    </lineage>
</organism>
<keyword id="KW-1185">Reference proteome</keyword>
<keyword id="KW-0687">Ribonucleoprotein</keyword>
<keyword id="KW-0689">Ribosomal protein</keyword>
<proteinExistence type="inferred from homology"/>
<accession>Q2FNR1</accession>
<comment type="similarity">
    <text evidence="1">Belongs to the eukaryotic ribosomal protein eS17 family.</text>
</comment>
<reference key="1">
    <citation type="journal article" date="2016" name="Stand. Genomic Sci.">
        <title>Complete genome sequence of Methanospirillum hungatei type strain JF1.</title>
        <authorList>
            <person name="Gunsalus R.P."/>
            <person name="Cook L.E."/>
            <person name="Crable B."/>
            <person name="Rohlin L."/>
            <person name="McDonald E."/>
            <person name="Mouttaki H."/>
            <person name="Sieber J.R."/>
            <person name="Poweleit N."/>
            <person name="Zhou H."/>
            <person name="Lapidus A.L."/>
            <person name="Daligault H.E."/>
            <person name="Land M."/>
            <person name="Gilna P."/>
            <person name="Ivanova N."/>
            <person name="Kyrpides N."/>
            <person name="Culley D.E."/>
            <person name="McInerney M.J."/>
        </authorList>
    </citation>
    <scope>NUCLEOTIDE SEQUENCE [LARGE SCALE GENOMIC DNA]</scope>
    <source>
        <strain>ATCC 27890 / DSM 864 / NBRC 100397 / JF-1</strain>
    </source>
</reference>
<dbReference type="EMBL" id="CP000254">
    <property type="protein sequence ID" value="ABD41225.1"/>
    <property type="molecule type" value="Genomic_DNA"/>
</dbReference>
<dbReference type="RefSeq" id="WP_011448494.1">
    <property type="nucleotide sequence ID" value="NC_007796.1"/>
</dbReference>
<dbReference type="SMR" id="Q2FNR1"/>
<dbReference type="FunCoup" id="Q2FNR1">
    <property type="interactions" value="57"/>
</dbReference>
<dbReference type="STRING" id="323259.Mhun_1491"/>
<dbReference type="EnsemblBacteria" id="ABD41225">
    <property type="protein sequence ID" value="ABD41225"/>
    <property type="gene ID" value="Mhun_1491"/>
</dbReference>
<dbReference type="GeneID" id="3922722"/>
<dbReference type="KEGG" id="mhu:Mhun_1491"/>
<dbReference type="eggNOG" id="arCOG01885">
    <property type="taxonomic scope" value="Archaea"/>
</dbReference>
<dbReference type="HOGENOM" id="CLU_176720_1_0_2"/>
<dbReference type="InParanoid" id="Q2FNR1"/>
<dbReference type="OrthoDB" id="52479at2157"/>
<dbReference type="Proteomes" id="UP000001941">
    <property type="component" value="Chromosome"/>
</dbReference>
<dbReference type="GO" id="GO:0005829">
    <property type="term" value="C:cytosol"/>
    <property type="evidence" value="ECO:0007669"/>
    <property type="project" value="UniProtKB-ARBA"/>
</dbReference>
<dbReference type="GO" id="GO:1990904">
    <property type="term" value="C:ribonucleoprotein complex"/>
    <property type="evidence" value="ECO:0007669"/>
    <property type="project" value="UniProtKB-KW"/>
</dbReference>
<dbReference type="GO" id="GO:0005840">
    <property type="term" value="C:ribosome"/>
    <property type="evidence" value="ECO:0007669"/>
    <property type="project" value="UniProtKB-KW"/>
</dbReference>
<dbReference type="GO" id="GO:0003735">
    <property type="term" value="F:structural constituent of ribosome"/>
    <property type="evidence" value="ECO:0007669"/>
    <property type="project" value="InterPro"/>
</dbReference>
<dbReference type="GO" id="GO:0006412">
    <property type="term" value="P:translation"/>
    <property type="evidence" value="ECO:0007669"/>
    <property type="project" value="UniProtKB-UniRule"/>
</dbReference>
<dbReference type="Gene3D" id="1.10.60.20">
    <property type="entry name" value="Ribosomal protein S17e-like"/>
    <property type="match status" value="1"/>
</dbReference>
<dbReference type="HAMAP" id="MF_00511">
    <property type="entry name" value="Ribosomal_eS17"/>
    <property type="match status" value="1"/>
</dbReference>
<dbReference type="InterPro" id="IPR001210">
    <property type="entry name" value="Ribosomal_eS17"/>
</dbReference>
<dbReference type="InterPro" id="IPR018273">
    <property type="entry name" value="Ribosomal_eS17_CS"/>
</dbReference>
<dbReference type="InterPro" id="IPR036401">
    <property type="entry name" value="Ribosomal_eS17_sf"/>
</dbReference>
<dbReference type="NCBIfam" id="NF002242">
    <property type="entry name" value="PRK01151.1"/>
    <property type="match status" value="1"/>
</dbReference>
<dbReference type="PANTHER" id="PTHR10732">
    <property type="entry name" value="40S RIBOSOMAL PROTEIN S17"/>
    <property type="match status" value="1"/>
</dbReference>
<dbReference type="PANTHER" id="PTHR10732:SF0">
    <property type="entry name" value="40S RIBOSOMAL PROTEIN S17"/>
    <property type="match status" value="1"/>
</dbReference>
<dbReference type="Pfam" id="PF00833">
    <property type="entry name" value="Ribosomal_S17e"/>
    <property type="match status" value="1"/>
</dbReference>
<dbReference type="SUPFAM" id="SSF116820">
    <property type="entry name" value="Rps17e-like"/>
    <property type="match status" value="1"/>
</dbReference>
<dbReference type="PROSITE" id="PS00712">
    <property type="entry name" value="RIBOSOMAL_S17E"/>
    <property type="match status" value="1"/>
</dbReference>
<sequence length="64" mass="7371">MGIKPTYIKKIGIELLEFHEEKFTNDFDENKKAVASATNVPSKRVRNRVAGYITRKINTGKFKK</sequence>
<evidence type="ECO:0000255" key="1">
    <source>
        <dbReference type="HAMAP-Rule" id="MF_00511"/>
    </source>
</evidence>
<evidence type="ECO:0000305" key="2"/>
<name>RS17E_METHJ</name>
<protein>
    <recommendedName>
        <fullName evidence="1">Small ribosomal subunit protein eS17</fullName>
    </recommendedName>
    <alternativeName>
        <fullName evidence="2">30S ribosomal protein S17e</fullName>
    </alternativeName>
</protein>
<feature type="chain" id="PRO_0000258603" description="Small ribosomal subunit protein eS17">
    <location>
        <begin position="1"/>
        <end position="64"/>
    </location>
</feature>
<gene>
    <name evidence="1" type="primary">rps17e</name>
    <name type="ordered locus">Mhun_1491</name>
</gene>